<name>PRM10_KLULA</name>
<organism>
    <name type="scientific">Kluyveromyces lactis (strain ATCC 8585 / CBS 2359 / DSM 70799 / NBRC 1267 / NRRL Y-1140 / WM37)</name>
    <name type="common">Yeast</name>
    <name type="synonym">Candida sphaerica</name>
    <dbReference type="NCBI Taxonomy" id="284590"/>
    <lineage>
        <taxon>Eukaryota</taxon>
        <taxon>Fungi</taxon>
        <taxon>Dikarya</taxon>
        <taxon>Ascomycota</taxon>
        <taxon>Saccharomycotina</taxon>
        <taxon>Saccharomycetes</taxon>
        <taxon>Saccharomycetales</taxon>
        <taxon>Saccharomycetaceae</taxon>
        <taxon>Kluyveromyces</taxon>
    </lineage>
</organism>
<reference key="1">
    <citation type="journal article" date="2004" name="Nature">
        <title>Genome evolution in yeasts.</title>
        <authorList>
            <person name="Dujon B."/>
            <person name="Sherman D."/>
            <person name="Fischer G."/>
            <person name="Durrens P."/>
            <person name="Casaregola S."/>
            <person name="Lafontaine I."/>
            <person name="de Montigny J."/>
            <person name="Marck C."/>
            <person name="Neuveglise C."/>
            <person name="Talla E."/>
            <person name="Goffard N."/>
            <person name="Frangeul L."/>
            <person name="Aigle M."/>
            <person name="Anthouard V."/>
            <person name="Babour A."/>
            <person name="Barbe V."/>
            <person name="Barnay S."/>
            <person name="Blanchin S."/>
            <person name="Beckerich J.-M."/>
            <person name="Beyne E."/>
            <person name="Bleykasten C."/>
            <person name="Boisrame A."/>
            <person name="Boyer J."/>
            <person name="Cattolico L."/>
            <person name="Confanioleri F."/>
            <person name="de Daruvar A."/>
            <person name="Despons L."/>
            <person name="Fabre E."/>
            <person name="Fairhead C."/>
            <person name="Ferry-Dumazet H."/>
            <person name="Groppi A."/>
            <person name="Hantraye F."/>
            <person name="Hennequin C."/>
            <person name="Jauniaux N."/>
            <person name="Joyet P."/>
            <person name="Kachouri R."/>
            <person name="Kerrest A."/>
            <person name="Koszul R."/>
            <person name="Lemaire M."/>
            <person name="Lesur I."/>
            <person name="Ma L."/>
            <person name="Muller H."/>
            <person name="Nicaud J.-M."/>
            <person name="Nikolski M."/>
            <person name="Oztas S."/>
            <person name="Ozier-Kalogeropoulos O."/>
            <person name="Pellenz S."/>
            <person name="Potier S."/>
            <person name="Richard G.-F."/>
            <person name="Straub M.-L."/>
            <person name="Suleau A."/>
            <person name="Swennen D."/>
            <person name="Tekaia F."/>
            <person name="Wesolowski-Louvel M."/>
            <person name="Westhof E."/>
            <person name="Wirth B."/>
            <person name="Zeniou-Meyer M."/>
            <person name="Zivanovic Y."/>
            <person name="Bolotin-Fukuhara M."/>
            <person name="Thierry A."/>
            <person name="Bouchier C."/>
            <person name="Caudron B."/>
            <person name="Scarpelli C."/>
            <person name="Gaillardin C."/>
            <person name="Weissenbach J."/>
            <person name="Wincker P."/>
            <person name="Souciet J.-L."/>
        </authorList>
    </citation>
    <scope>NUCLEOTIDE SEQUENCE [LARGE SCALE GENOMIC DNA]</scope>
    <source>
        <strain>ATCC 8585 / CBS 2359 / DSM 70799 / NBRC 1267 / NRRL Y-1140 / WM37</strain>
    </source>
</reference>
<sequence>MSSSYGNNGDKNNHEKFGFNLLRKKPQQPSNRSERRADDSSSSEDEAGPSSNYVSSSQLNLPSFRPSGGSTDELNRANRTNVGSSDARYSPRTASNTESGNRRQQMIEDDAIATIRDNSGAARCFDDDDEEEEEHQEQKDSGENPADISPRTSGVTKKLQFKSHPSIIPEDTATQDGGEYYEEKDAEKEDQDDSVSTQSSESKMDHFRHLFRRRSTARPHQETNDGRNSAESHSKGGMRNLNGADDEVEDGGFLSKFLSLTGGGLTPAVNNTDPSGENDHERNAGQNNLEDPIPMSDIAATAQQIVQAHSMMAGKSAPGTQHGASGSASSEHPNGEHNLGTEAGVTSPFEPVSPFNQSTDGETMVSSHQDDAFYVPATNHYDDIDDPDDLEPLGIEGSYIAPVDRVRGGVLGSLLKLYQNQDDQYTKSQLSLNDSSIEQTPEPVDQAGKSDQKTGKKIYNPFHKHSKSQTNVSGANKSGSSMNLPNFKATRPKAAAKNLVKAKNFKKKAAAEARITVHIADLLQRQRFILRLCKALMLYGAPTHRLEEYMVMTSRVLEIDGQFLYVPGCMIISFGDMTTRTSEVQLVRCNQGLNLWKLHGVHSVYKQVVHDIMSVEDANMEIDRILTGKNLYPPWVSVLLYAFCSSMVTPFAFGGDWINMAVAFGIGLCVGSLQFIVSQKSNLYSNVFEVTASIVVSFCGRALGSIPNSNICFGATVQGSLALILPGYIILCGSLELQSRNLVAGAVRMFYAIIYSLFLGFGITLGAALFGWIYHDATNETSCSKNISPWFRFIFVPCFSIGLGLINQARWTQLPVMTLISCCGYVVTYFSGKHFANSTEFTSAMAAFVIGILGNLYSRIWKGFAVSAMLPAIFVQVPSGVASQSSLLAGVQSANAIVNNSTTTVVQDDLSGSMSFGVTMIQVSIGISVGLFASTLFIYPFGKKRTGLFTL</sequence>
<proteinExistence type="inferred from homology"/>
<gene>
    <name type="ordered locus">KLLA0F02816g</name>
</gene>
<protein>
    <recommendedName>
        <fullName>Pheromone-regulated membrane protein 10</fullName>
    </recommendedName>
</protein>
<feature type="chain" id="PRO_0000409254" description="Pheromone-regulated membrane protein 10">
    <location>
        <begin position="1"/>
        <end position="951"/>
    </location>
</feature>
<feature type="transmembrane region" description="Helical" evidence="1">
    <location>
        <begin position="635"/>
        <end position="655"/>
    </location>
</feature>
<feature type="transmembrane region" description="Helical" evidence="1">
    <location>
        <begin position="657"/>
        <end position="677"/>
    </location>
</feature>
<feature type="transmembrane region" description="Helical" evidence="1">
    <location>
        <begin position="687"/>
        <end position="707"/>
    </location>
</feature>
<feature type="transmembrane region" description="Helical" evidence="1">
    <location>
        <begin position="711"/>
        <end position="731"/>
    </location>
</feature>
<feature type="transmembrane region" description="Helical" evidence="1">
    <location>
        <begin position="753"/>
        <end position="773"/>
    </location>
</feature>
<feature type="transmembrane region" description="Helical" evidence="1">
    <location>
        <begin position="786"/>
        <end position="806"/>
    </location>
</feature>
<feature type="transmembrane region" description="Helical" evidence="1">
    <location>
        <begin position="811"/>
        <end position="831"/>
    </location>
</feature>
<feature type="transmembrane region" description="Helical" evidence="1">
    <location>
        <begin position="841"/>
        <end position="861"/>
    </location>
</feature>
<feature type="transmembrane region" description="Helical" evidence="1">
    <location>
        <begin position="863"/>
        <end position="883"/>
    </location>
</feature>
<feature type="transmembrane region" description="Helical" evidence="1">
    <location>
        <begin position="918"/>
        <end position="938"/>
    </location>
</feature>
<feature type="region of interest" description="Disordered" evidence="2">
    <location>
        <begin position="1"/>
        <end position="293"/>
    </location>
</feature>
<feature type="region of interest" description="Disordered" evidence="2">
    <location>
        <begin position="313"/>
        <end position="366"/>
    </location>
</feature>
<feature type="region of interest" description="Disordered" evidence="2">
    <location>
        <begin position="433"/>
        <end position="487"/>
    </location>
</feature>
<feature type="compositionally biased region" description="Polar residues" evidence="2">
    <location>
        <begin position="1"/>
        <end position="10"/>
    </location>
</feature>
<feature type="compositionally biased region" description="Polar residues" evidence="2">
    <location>
        <begin position="68"/>
        <end position="84"/>
    </location>
</feature>
<feature type="compositionally biased region" description="Polar residues" evidence="2">
    <location>
        <begin position="92"/>
        <end position="104"/>
    </location>
</feature>
<feature type="compositionally biased region" description="Acidic residues" evidence="2">
    <location>
        <begin position="126"/>
        <end position="135"/>
    </location>
</feature>
<feature type="compositionally biased region" description="Basic and acidic residues" evidence="2">
    <location>
        <begin position="219"/>
        <end position="234"/>
    </location>
</feature>
<feature type="compositionally biased region" description="Polar residues" evidence="2">
    <location>
        <begin position="318"/>
        <end position="332"/>
    </location>
</feature>
<feature type="compositionally biased region" description="Polar residues" evidence="2">
    <location>
        <begin position="354"/>
        <end position="366"/>
    </location>
</feature>
<feature type="compositionally biased region" description="Polar residues" evidence="2">
    <location>
        <begin position="468"/>
        <end position="484"/>
    </location>
</feature>
<dbReference type="EMBL" id="CR382126">
    <property type="protein sequence ID" value="CAG97915.1"/>
    <property type="molecule type" value="Genomic_DNA"/>
</dbReference>
<dbReference type="RefSeq" id="XP_455207.1">
    <property type="nucleotide sequence ID" value="XM_455207.1"/>
</dbReference>
<dbReference type="PaxDb" id="284590-Q6CLI2"/>
<dbReference type="KEGG" id="kla:KLLA0_F02816g"/>
<dbReference type="eggNOG" id="ENOG502QPMM">
    <property type="taxonomic scope" value="Eukaryota"/>
</dbReference>
<dbReference type="HOGENOM" id="CLU_007078_1_1_1"/>
<dbReference type="InParanoid" id="Q6CLI2"/>
<dbReference type="OMA" id="MTLISCC"/>
<dbReference type="Proteomes" id="UP000000598">
    <property type="component" value="Chromosome F"/>
</dbReference>
<dbReference type="GO" id="GO:0016020">
    <property type="term" value="C:membrane"/>
    <property type="evidence" value="ECO:0007669"/>
    <property type="project" value="UniProtKB-SubCell"/>
</dbReference>
<dbReference type="GO" id="GO:0022857">
    <property type="term" value="F:transmembrane transporter activity"/>
    <property type="evidence" value="ECO:0007669"/>
    <property type="project" value="InterPro"/>
</dbReference>
<dbReference type="InterPro" id="IPR010619">
    <property type="entry name" value="ThrE-like_N"/>
</dbReference>
<dbReference type="InterPro" id="IPR051361">
    <property type="entry name" value="ThrE/Ser_Exporter"/>
</dbReference>
<dbReference type="InterPro" id="IPR024528">
    <property type="entry name" value="ThrE_2"/>
</dbReference>
<dbReference type="PANTHER" id="PTHR31082">
    <property type="entry name" value="PHEROMONE-REGULATED MEMBRANE PROTEIN 10"/>
    <property type="match status" value="1"/>
</dbReference>
<dbReference type="PANTHER" id="PTHR31082:SF4">
    <property type="entry name" value="PHEROMONE-REGULATED MEMBRANE PROTEIN 10"/>
    <property type="match status" value="1"/>
</dbReference>
<dbReference type="Pfam" id="PF06738">
    <property type="entry name" value="ThrE"/>
    <property type="match status" value="1"/>
</dbReference>
<dbReference type="Pfam" id="PF12821">
    <property type="entry name" value="ThrE_2"/>
    <property type="match status" value="1"/>
</dbReference>
<evidence type="ECO:0000255" key="1"/>
<evidence type="ECO:0000256" key="2">
    <source>
        <dbReference type="SAM" id="MobiDB-lite"/>
    </source>
</evidence>
<evidence type="ECO:0000305" key="3"/>
<comment type="subcellular location">
    <subcellularLocation>
        <location>Membrane</location>
        <topology>Multi-pass membrane protein</topology>
    </subcellularLocation>
</comment>
<comment type="similarity">
    <text evidence="3">Belongs to the ThrE exporter (TC 2.A.79) family.</text>
</comment>
<keyword id="KW-0472">Membrane</keyword>
<keyword id="KW-1185">Reference proteome</keyword>
<keyword id="KW-0812">Transmembrane</keyword>
<keyword id="KW-1133">Transmembrane helix</keyword>
<accession>Q6CLI2</accession>